<organism>
    <name type="scientific">Porphyromonas gingivalis (strain ATCC 33277 / DSM 20709 / CIP 103683 / JCM 12257 / NCTC 11834 / 2561)</name>
    <dbReference type="NCBI Taxonomy" id="431947"/>
    <lineage>
        <taxon>Bacteria</taxon>
        <taxon>Pseudomonadati</taxon>
        <taxon>Bacteroidota</taxon>
        <taxon>Bacteroidia</taxon>
        <taxon>Bacteroidales</taxon>
        <taxon>Porphyromonadaceae</taxon>
        <taxon>Porphyromonas</taxon>
    </lineage>
</organism>
<gene>
    <name type="primary">dps</name>
    <name type="ordered locus">PGN_2037</name>
</gene>
<accession>B2RMG0</accession>
<accession>Q7MXS1</accession>
<accession>Q9WXJ3</accession>
<sequence length="159" mass="17823">MKKILEVTGLKEQQVAPVVKGLSGLLADLQVYYSNLRGFHWNIRGAEFFVLHEQYEKMYDDLAGKIDEVAERILQLGGKPENRFSEYLKVAEVKEEHELVCAASTLKNVTDTLQIIMAKERAIAEVAGEAGDEVTVDLMIGFLSGQEKLVWMLSAYATK</sequence>
<keyword id="KW-0963">Cytoplasm</keyword>
<keyword id="KW-0903">Direct protein sequencing</keyword>
<keyword id="KW-0408">Iron</keyword>
<keyword id="KW-0479">Metal-binding</keyword>
<keyword id="KW-0560">Oxidoreductase</keyword>
<proteinExistence type="evidence at protein level"/>
<comment type="function">
    <text evidence="2">Responsible for protection of cells against peroxide, especially against hydrogen peroxide. Required for survival in host cells. Although it binds iron, it may not contribute to iron storage. The iron-loaded dps has DNA-binding activity.</text>
</comment>
<comment type="subunit">
    <text evidence="3">Homododecamer.</text>
</comment>
<comment type="subcellular location">
    <subcellularLocation>
        <location evidence="1">Cytoplasm</location>
    </subcellularLocation>
</comment>
<comment type="induction">
    <text>Constitutively expressed but is up-regulated by exposure to atomospheric oxygen in an OxyR-dependent manner.</text>
</comment>
<comment type="similarity">
    <text evidence="3">Belongs to the Dps family.</text>
</comment>
<reference key="1">
    <citation type="journal article" date="2003" name="Infect. Immun.">
        <title>Purification, gene cloning, gene expression, and mutants of Dps from the obligate anaerobe Porphyromonas gingivalis.</title>
        <authorList>
            <person name="Ueshima J."/>
            <person name="Shoji M."/>
            <person name="Ratnayake D.B."/>
            <person name="Abe K."/>
            <person name="Yoshida S."/>
            <person name="Yamamoto K."/>
            <person name="Nakayama K."/>
        </authorList>
    </citation>
    <scope>NUCLEOTIDE SEQUENCE [GENOMIC DNA]</scope>
    <scope>PROTEIN SEQUENCE OF 1-15</scope>
    <scope>EXPRESSION</scope>
    <scope>FUNCTION IN PROTECTION AGAINST HYDROGEN PEROXIDE</scope>
</reference>
<reference key="2">
    <citation type="journal article" date="2008" name="DNA Res.">
        <title>Determination of the genome sequence of Porphyromonas gingivalis strain ATCC 33277 and genomic comparison with strain W83 revealed extensive genome rearrangements in P. gingivalis.</title>
        <authorList>
            <person name="Naito M."/>
            <person name="Hirakawa H."/>
            <person name="Yamashita A."/>
            <person name="Ohara N."/>
            <person name="Shoji M."/>
            <person name="Yukitake H."/>
            <person name="Nakayama K."/>
            <person name="Toh H."/>
            <person name="Yoshimura F."/>
            <person name="Kuhara S."/>
            <person name="Hattori M."/>
            <person name="Hayashi T."/>
            <person name="Nakayama K."/>
        </authorList>
    </citation>
    <scope>NUCLEOTIDE SEQUENCE [LARGE SCALE GENOMIC DNA]</scope>
    <source>
        <strain>ATCC 33277 / DSM 20709 / CIP 103683 / JCM 12257 / NCTC 11834 / 2561</strain>
    </source>
</reference>
<feature type="chain" id="PRO_0000370693" description="DNA protection during starvation protein">
    <location>
        <begin position="1"/>
        <end position="159"/>
    </location>
</feature>
<feature type="binding site" evidence="1">
    <location>
        <position position="40"/>
    </location>
    <ligand>
        <name>Fe cation</name>
        <dbReference type="ChEBI" id="CHEBI:24875"/>
        <label>1</label>
        <note>ligand shared between two dodecameric partners</note>
    </ligand>
</feature>
<feature type="binding site" description="in other chain" evidence="1">
    <location>
        <position position="67"/>
    </location>
    <ligand>
        <name>Fe cation</name>
        <dbReference type="ChEBI" id="CHEBI:24875"/>
        <label>1</label>
        <note>ligand shared between two dodecameric partners</note>
    </ligand>
</feature>
<feature type="binding site" description="in other chain" evidence="1">
    <location>
        <position position="71"/>
    </location>
    <ligand>
        <name>Fe cation</name>
        <dbReference type="ChEBI" id="CHEBI:24875"/>
        <label>1</label>
        <note>ligand shared between two dodecameric partners</note>
    </ligand>
</feature>
<feature type="binding site" evidence="1">
    <location>
        <position position="71"/>
    </location>
    <ligand>
        <name>Fe cation</name>
        <dbReference type="ChEBI" id="CHEBI:24875"/>
        <label>2</label>
    </ligand>
</feature>
<feature type="sequence conflict" description="In Ref. 1; BAA76886." evidence="3" ref="1">
    <original>T</original>
    <variation>A</variation>
    <location>
        <position position="158"/>
    </location>
</feature>
<protein>
    <recommendedName>
        <fullName>DNA protection during starvation protein</fullName>
        <ecNumber>1.16.-.-</ecNumber>
    </recommendedName>
</protein>
<name>DPS_PORG3</name>
<dbReference type="EC" id="1.16.-.-"/>
<dbReference type="EMBL" id="AB025779">
    <property type="protein sequence ID" value="BAA76886.1"/>
    <property type="molecule type" value="Genomic_DNA"/>
</dbReference>
<dbReference type="EMBL" id="AP009380">
    <property type="protein sequence ID" value="BAG34555.1"/>
    <property type="molecule type" value="Genomic_DNA"/>
</dbReference>
<dbReference type="RefSeq" id="WP_012458706.1">
    <property type="nucleotide sequence ID" value="NC_010729.1"/>
</dbReference>
<dbReference type="SMR" id="B2RMG0"/>
<dbReference type="GeneID" id="29257172"/>
<dbReference type="KEGG" id="pgn:PGN_2037"/>
<dbReference type="eggNOG" id="COG0783">
    <property type="taxonomic scope" value="Bacteria"/>
</dbReference>
<dbReference type="HOGENOM" id="CLU_098183_2_2_10"/>
<dbReference type="OrthoDB" id="9797023at2"/>
<dbReference type="BioCyc" id="PGIN431947:G1G2V-2270-MONOMER"/>
<dbReference type="Proteomes" id="UP000008842">
    <property type="component" value="Chromosome"/>
</dbReference>
<dbReference type="GO" id="GO:0005737">
    <property type="term" value="C:cytoplasm"/>
    <property type="evidence" value="ECO:0007669"/>
    <property type="project" value="UniProtKB-SubCell"/>
</dbReference>
<dbReference type="GO" id="GO:0008199">
    <property type="term" value="F:ferric iron binding"/>
    <property type="evidence" value="ECO:0007669"/>
    <property type="project" value="InterPro"/>
</dbReference>
<dbReference type="GO" id="GO:0016722">
    <property type="term" value="F:oxidoreductase activity, acting on metal ions"/>
    <property type="evidence" value="ECO:0007669"/>
    <property type="project" value="InterPro"/>
</dbReference>
<dbReference type="CDD" id="cd01043">
    <property type="entry name" value="DPS"/>
    <property type="match status" value="1"/>
</dbReference>
<dbReference type="Gene3D" id="1.20.1260.10">
    <property type="match status" value="1"/>
</dbReference>
<dbReference type="InterPro" id="IPR002177">
    <property type="entry name" value="DPS_DNA-bd"/>
</dbReference>
<dbReference type="InterPro" id="IPR023188">
    <property type="entry name" value="DPS_DNA-bd_CS"/>
</dbReference>
<dbReference type="InterPro" id="IPR012347">
    <property type="entry name" value="Ferritin-like"/>
</dbReference>
<dbReference type="InterPro" id="IPR009078">
    <property type="entry name" value="Ferritin-like_SF"/>
</dbReference>
<dbReference type="InterPro" id="IPR008331">
    <property type="entry name" value="Ferritin_DPS_dom"/>
</dbReference>
<dbReference type="PANTHER" id="PTHR42932">
    <property type="entry name" value="GENERAL STRESS PROTEIN 20U"/>
    <property type="match status" value="1"/>
</dbReference>
<dbReference type="PANTHER" id="PTHR42932:SF1">
    <property type="entry name" value="GENERAL STRESS PROTEIN 20U"/>
    <property type="match status" value="1"/>
</dbReference>
<dbReference type="Pfam" id="PF00210">
    <property type="entry name" value="Ferritin"/>
    <property type="match status" value="1"/>
</dbReference>
<dbReference type="PIRSF" id="PIRSF005900">
    <property type="entry name" value="Dps"/>
    <property type="match status" value="1"/>
</dbReference>
<dbReference type="PRINTS" id="PR01346">
    <property type="entry name" value="HELNAPAPROT"/>
</dbReference>
<dbReference type="SUPFAM" id="SSF47240">
    <property type="entry name" value="Ferritin-like"/>
    <property type="match status" value="1"/>
</dbReference>
<dbReference type="PROSITE" id="PS00818">
    <property type="entry name" value="DPS_1"/>
    <property type="match status" value="1"/>
</dbReference>
<dbReference type="PROSITE" id="PS00819">
    <property type="entry name" value="DPS_2"/>
    <property type="match status" value="1"/>
</dbReference>
<evidence type="ECO:0000250" key="1"/>
<evidence type="ECO:0000269" key="2">
    <source>
    </source>
</evidence>
<evidence type="ECO:0000305" key="3"/>